<sequence>MAKKSLNETSPVARFEQSLEELEQLVQKMEVGDLSLEQSLTAYERGIGLYRDCQQTLEQAELRVRLLTDPARPELAEAFEPPSLDG</sequence>
<organism>
    <name type="scientific">Xanthomonas euvesicatoria pv. vesicatoria (strain 85-10)</name>
    <name type="common">Xanthomonas campestris pv. vesicatoria</name>
    <dbReference type="NCBI Taxonomy" id="316273"/>
    <lineage>
        <taxon>Bacteria</taxon>
        <taxon>Pseudomonadati</taxon>
        <taxon>Pseudomonadota</taxon>
        <taxon>Gammaproteobacteria</taxon>
        <taxon>Lysobacterales</taxon>
        <taxon>Lysobacteraceae</taxon>
        <taxon>Xanthomonas</taxon>
    </lineage>
</organism>
<proteinExistence type="inferred from homology"/>
<comment type="function">
    <text evidence="1">Bidirectionally degrades single-stranded DNA into large acid-insoluble oligonucleotides, which are then degraded further into small acid-soluble oligonucleotides.</text>
</comment>
<comment type="catalytic activity">
    <reaction evidence="1">
        <text>Exonucleolytic cleavage in either 5'- to 3'- or 3'- to 5'-direction to yield nucleoside 5'-phosphates.</text>
        <dbReference type="EC" id="3.1.11.6"/>
    </reaction>
</comment>
<comment type="subunit">
    <text evidence="1">Heterooligomer composed of large and small subunits.</text>
</comment>
<comment type="subcellular location">
    <subcellularLocation>
        <location evidence="1">Cytoplasm</location>
    </subcellularLocation>
</comment>
<comment type="similarity">
    <text evidence="1">Belongs to the XseB family.</text>
</comment>
<name>EX7S_XANE5</name>
<reference key="1">
    <citation type="journal article" date="2005" name="J. Bacteriol.">
        <title>Insights into genome plasticity and pathogenicity of the plant pathogenic Bacterium Xanthomonas campestris pv. vesicatoria revealed by the complete genome sequence.</title>
        <authorList>
            <person name="Thieme F."/>
            <person name="Koebnik R."/>
            <person name="Bekel T."/>
            <person name="Berger C."/>
            <person name="Boch J."/>
            <person name="Buettner D."/>
            <person name="Caldana C."/>
            <person name="Gaigalat L."/>
            <person name="Goesmann A."/>
            <person name="Kay S."/>
            <person name="Kirchner O."/>
            <person name="Lanz C."/>
            <person name="Linke B."/>
            <person name="McHardy A.C."/>
            <person name="Meyer F."/>
            <person name="Mittenhuber G."/>
            <person name="Nies D.H."/>
            <person name="Niesbach-Kloesgen U."/>
            <person name="Patschkowski T."/>
            <person name="Rueckert C."/>
            <person name="Rupp O."/>
            <person name="Schneiker S."/>
            <person name="Schuster S.C."/>
            <person name="Vorhoelter F.J."/>
            <person name="Weber E."/>
            <person name="Puehler A."/>
            <person name="Bonas U."/>
            <person name="Bartels D."/>
            <person name="Kaiser O."/>
        </authorList>
    </citation>
    <scope>NUCLEOTIDE SEQUENCE [LARGE SCALE GENOMIC DNA]</scope>
    <source>
        <strain>85-10</strain>
    </source>
</reference>
<dbReference type="EC" id="3.1.11.6" evidence="1"/>
<dbReference type="EMBL" id="AM039952">
    <property type="protein sequence ID" value="CAJ24594.1"/>
    <property type="molecule type" value="Genomic_DNA"/>
</dbReference>
<dbReference type="RefSeq" id="WP_011347986.1">
    <property type="nucleotide sequence ID" value="NZ_CP017190.1"/>
</dbReference>
<dbReference type="SMR" id="Q3BRG7"/>
<dbReference type="STRING" id="456327.BJD11_08270"/>
<dbReference type="KEGG" id="xcv:XCV2915"/>
<dbReference type="eggNOG" id="COG1722">
    <property type="taxonomic scope" value="Bacteria"/>
</dbReference>
<dbReference type="HOGENOM" id="CLU_145918_3_3_6"/>
<dbReference type="Proteomes" id="UP000007069">
    <property type="component" value="Chromosome"/>
</dbReference>
<dbReference type="GO" id="GO:0005829">
    <property type="term" value="C:cytosol"/>
    <property type="evidence" value="ECO:0007669"/>
    <property type="project" value="TreeGrafter"/>
</dbReference>
<dbReference type="GO" id="GO:0009318">
    <property type="term" value="C:exodeoxyribonuclease VII complex"/>
    <property type="evidence" value="ECO:0007669"/>
    <property type="project" value="InterPro"/>
</dbReference>
<dbReference type="GO" id="GO:0008855">
    <property type="term" value="F:exodeoxyribonuclease VII activity"/>
    <property type="evidence" value="ECO:0007669"/>
    <property type="project" value="UniProtKB-UniRule"/>
</dbReference>
<dbReference type="GO" id="GO:0006308">
    <property type="term" value="P:DNA catabolic process"/>
    <property type="evidence" value="ECO:0007669"/>
    <property type="project" value="UniProtKB-UniRule"/>
</dbReference>
<dbReference type="FunFam" id="1.10.287.1040:FF:000005">
    <property type="entry name" value="Exodeoxyribonuclease 7 small subunit"/>
    <property type="match status" value="1"/>
</dbReference>
<dbReference type="Gene3D" id="1.10.287.1040">
    <property type="entry name" value="Exonuclease VII, small subunit"/>
    <property type="match status" value="1"/>
</dbReference>
<dbReference type="HAMAP" id="MF_00337">
    <property type="entry name" value="Exonuc_7_S"/>
    <property type="match status" value="1"/>
</dbReference>
<dbReference type="InterPro" id="IPR003761">
    <property type="entry name" value="Exonuc_VII_S"/>
</dbReference>
<dbReference type="InterPro" id="IPR037004">
    <property type="entry name" value="Exonuc_VII_ssu_sf"/>
</dbReference>
<dbReference type="NCBIfam" id="NF002140">
    <property type="entry name" value="PRK00977.1-4"/>
    <property type="match status" value="1"/>
</dbReference>
<dbReference type="NCBIfam" id="TIGR01280">
    <property type="entry name" value="xseB"/>
    <property type="match status" value="1"/>
</dbReference>
<dbReference type="PANTHER" id="PTHR34137">
    <property type="entry name" value="EXODEOXYRIBONUCLEASE 7 SMALL SUBUNIT"/>
    <property type="match status" value="1"/>
</dbReference>
<dbReference type="PANTHER" id="PTHR34137:SF1">
    <property type="entry name" value="EXODEOXYRIBONUCLEASE 7 SMALL SUBUNIT"/>
    <property type="match status" value="1"/>
</dbReference>
<dbReference type="Pfam" id="PF02609">
    <property type="entry name" value="Exonuc_VII_S"/>
    <property type="match status" value="1"/>
</dbReference>
<dbReference type="PIRSF" id="PIRSF006488">
    <property type="entry name" value="Exonuc_VII_S"/>
    <property type="match status" value="1"/>
</dbReference>
<dbReference type="SUPFAM" id="SSF116842">
    <property type="entry name" value="XseB-like"/>
    <property type="match status" value="1"/>
</dbReference>
<keyword id="KW-0963">Cytoplasm</keyword>
<keyword id="KW-0269">Exonuclease</keyword>
<keyword id="KW-0378">Hydrolase</keyword>
<keyword id="KW-0540">Nuclease</keyword>
<protein>
    <recommendedName>
        <fullName evidence="1">Exodeoxyribonuclease 7 small subunit</fullName>
        <ecNumber evidence="1">3.1.11.6</ecNumber>
    </recommendedName>
    <alternativeName>
        <fullName evidence="1">Exodeoxyribonuclease VII small subunit</fullName>
        <shortName evidence="1">Exonuclease VII small subunit</shortName>
    </alternativeName>
</protein>
<feature type="chain" id="PRO_0000303769" description="Exodeoxyribonuclease 7 small subunit">
    <location>
        <begin position="1"/>
        <end position="86"/>
    </location>
</feature>
<accession>Q3BRG7</accession>
<gene>
    <name evidence="1" type="primary">xseB</name>
    <name type="ordered locus">XCV2915</name>
</gene>
<evidence type="ECO:0000255" key="1">
    <source>
        <dbReference type="HAMAP-Rule" id="MF_00337"/>
    </source>
</evidence>